<protein>
    <recommendedName>
        <fullName>Protein OPG157</fullName>
    </recommendedName>
    <alternativeName>
        <fullName>Protein A33</fullName>
    </alternativeName>
</protein>
<organismHost>
    <name type="scientific">Homo sapiens</name>
    <name type="common">Human</name>
    <dbReference type="NCBI Taxonomy" id="9606"/>
</organismHost>
<reference key="1">
    <citation type="journal article" date="1991" name="Dokl. Akad. Nauk SSSR">
        <title>Creation of a clone library of fragments from the natural variola virus and study of the structural and functional organization of viral genes from a circle of hosts.</title>
        <authorList>
            <person name="Shchelkunov S.N."/>
            <person name="Marennikova S.S."/>
            <person name="Totmenin A.V."/>
            <person name="Blinov V.M."/>
            <person name="Chizhikov V.E."/>
            <person name="Gutorov V.V."/>
            <person name="Safronov P.F."/>
            <person name="Pozdnyakov S.G."/>
            <person name="Shelukhina E.M."/>
            <person name="Gashnikov P.V."/>
            <person name="Anjaparidze O.G."/>
            <person name="Sandakhchiev L.S."/>
        </authorList>
    </citation>
    <scope>NUCLEOTIDE SEQUENCE [GENOMIC DNA]</scope>
</reference>
<reference key="2">
    <citation type="journal article" date="1993" name="FEBS Lett.">
        <title>Genes of variola and vaccinia viruses necessary to overcome the host protective mechanisms.</title>
        <authorList>
            <person name="Shchelkunov S.N."/>
            <person name="Blinov V.M."/>
            <person name="Sandakhchiev L.S."/>
        </authorList>
    </citation>
    <scope>NUCLEOTIDE SEQUENCE [GENOMIC DNA]</scope>
</reference>
<keyword id="KW-0597">Phosphoprotein</keyword>
<keyword id="KW-1185">Reference proteome</keyword>
<evidence type="ECO:0000250" key="1">
    <source>
        <dbReference type="UniProtKB" id="P68596"/>
    </source>
</evidence>
<evidence type="ECO:0000256" key="2">
    <source>
        <dbReference type="SAM" id="MobiDB-lite"/>
    </source>
</evidence>
<evidence type="ECO:0000305" key="3"/>
<accession>P0DOT9</accession>
<accession>P21088</accession>
<accession>P68597</accession>
<name>PG157_VAR67</name>
<sequence length="77" mass="8745">MEDLNEANFSHLLINLSNNKDIDAQYASTLSVVHELLSAINFKIFNINKKSKKNSKSIEQHPVVHHAASAGREFNRR</sequence>
<feature type="chain" id="PRO_0000099307" description="Protein OPG157">
    <location>
        <begin position="1"/>
        <end position="77"/>
    </location>
</feature>
<feature type="region of interest" description="Disordered" evidence="2">
    <location>
        <begin position="53"/>
        <end position="77"/>
    </location>
</feature>
<comment type="function">
    <text evidence="1">Required for the association between the dense viroplasm and the viral membranes to form the mature virion (MV).</text>
</comment>
<comment type="subunit">
    <text evidence="1">Interacts with protein OPG092; the interaction stabilizes both proteins. Interacts with protein OPG062.</text>
</comment>
<comment type="PTM">
    <text evidence="1">Phosphorylated by viral OPG054 kinase.</text>
</comment>
<comment type="similarity">
    <text evidence="3">Belongs to the orthopoxvirus OPG157 family.</text>
</comment>
<dbReference type="EMBL" id="X67115">
    <property type="protein sequence ID" value="CAA47504.1"/>
    <property type="molecule type" value="Genomic_DNA"/>
</dbReference>
<dbReference type="EMBL" id="X69198">
    <property type="protein sequence ID" value="CAA49078.1"/>
    <property type="molecule type" value="Genomic_DNA"/>
</dbReference>
<dbReference type="PIR" id="G36851">
    <property type="entry name" value="G36851"/>
</dbReference>
<dbReference type="RefSeq" id="NP_042181.1">
    <property type="nucleotide sequence ID" value="NC_001611.1"/>
</dbReference>
<dbReference type="GeneID" id="1486511"/>
<dbReference type="KEGG" id="vg:1486511"/>
<dbReference type="Proteomes" id="UP000002060">
    <property type="component" value="Segment"/>
</dbReference>
<dbReference type="InterPro" id="IPR009257">
    <property type="entry name" value="Chordopox_A30L"/>
</dbReference>
<dbReference type="Pfam" id="PF06015">
    <property type="entry name" value="Chordopox_A30L"/>
    <property type="match status" value="1"/>
</dbReference>
<proteinExistence type="inferred from homology"/>
<organism>
    <name type="scientific">Variola virus (isolate Human/India/Ind3/1967)</name>
    <name type="common">VARV</name>
    <name type="synonym">Smallpox virus</name>
    <dbReference type="NCBI Taxonomy" id="587200"/>
    <lineage>
        <taxon>Viruses</taxon>
        <taxon>Varidnaviria</taxon>
        <taxon>Bamfordvirae</taxon>
        <taxon>Nucleocytoviricota</taxon>
        <taxon>Pokkesviricetes</taxon>
        <taxon>Chitovirales</taxon>
        <taxon>Poxviridae</taxon>
        <taxon>Chordopoxvirinae</taxon>
        <taxon>Orthopoxvirus</taxon>
        <taxon>Variola virus</taxon>
    </lineage>
</organism>
<gene>
    <name type="primary">OPG157</name>
    <name type="ORF">A30L</name>
    <name type="ORF">A33L</name>
</gene>